<sequence length="162" mass="16671">MALVAGIGQLDAVVQGGHSATPRPATGPAGPAAHSGRHQYDPDAWWARATGDSREAGGLGRTLAAASVAGQQQRHGALLESAVTVVRPALLWNDTRRPGAAADLIQELGGADKWAEAVGIVPVASLTLTNSGWLARHEPANAAKVAAICLPHDWLTWKLSGS</sequence>
<evidence type="ECO:0000255" key="1">
    <source>
        <dbReference type="HAMAP-Rule" id="MF_02220"/>
    </source>
</evidence>
<evidence type="ECO:0000256" key="2">
    <source>
        <dbReference type="SAM" id="MobiDB-lite"/>
    </source>
</evidence>
<evidence type="ECO:0000305" key="3"/>
<comment type="function">
    <text evidence="1">Catalyzes the phosphorylation of D-xylulose to D-xylulose 5-phosphate.</text>
</comment>
<comment type="catalytic activity">
    <reaction evidence="1">
        <text>D-xylulose + ATP = D-xylulose 5-phosphate + ADP + H(+)</text>
        <dbReference type="Rhea" id="RHEA:10964"/>
        <dbReference type="ChEBI" id="CHEBI:15378"/>
        <dbReference type="ChEBI" id="CHEBI:17140"/>
        <dbReference type="ChEBI" id="CHEBI:30616"/>
        <dbReference type="ChEBI" id="CHEBI:57737"/>
        <dbReference type="ChEBI" id="CHEBI:456216"/>
        <dbReference type="EC" id="2.7.1.17"/>
    </reaction>
</comment>
<comment type="similarity">
    <text evidence="1 3">Belongs to the FGGY kinase family.</text>
</comment>
<accession>P54271</accession>
<reference key="1">
    <citation type="journal article" date="1987" name="J. Bacteriol.">
        <title>Sequence of the Ampullariella sp. strain 3876 gene coding for xylose isomerase.</title>
        <authorList>
            <person name="Saari G.C."/>
            <person name="Kumar A.A."/>
            <person name="Kawasaki G.H."/>
            <person name="Insley M.Y."/>
            <person name="O'Hara P.J."/>
        </authorList>
    </citation>
    <scope>NUCLEOTIDE SEQUENCE [GENOMIC DNA]</scope>
</reference>
<feature type="chain" id="PRO_0000059546" description="Xylulose kinase">
    <location>
        <begin position="1"/>
        <end position="162" status="greater than"/>
    </location>
</feature>
<feature type="region of interest" description="Disordered" evidence="2">
    <location>
        <begin position="16"/>
        <end position="39"/>
    </location>
</feature>
<feature type="compositionally biased region" description="Low complexity" evidence="2">
    <location>
        <begin position="20"/>
        <end position="33"/>
    </location>
</feature>
<feature type="non-terminal residue">
    <location>
        <position position="162"/>
    </location>
</feature>
<organism>
    <name type="scientific">Actinoplanes sp. (strain ATCC 31351 / 3876)</name>
    <name type="common">Ampullariella sp.</name>
    <dbReference type="NCBI Taxonomy" id="1872"/>
    <lineage>
        <taxon>Bacteria</taxon>
        <taxon>Bacillati</taxon>
        <taxon>Actinomycetota</taxon>
        <taxon>Actinomycetes</taxon>
        <taxon>Micromonosporales</taxon>
        <taxon>Micromonosporaceae</taxon>
        <taxon>Actinoplanes</taxon>
    </lineage>
</organism>
<proteinExistence type="inferred from homology"/>
<keyword id="KW-0067">ATP-binding</keyword>
<keyword id="KW-0119">Carbohydrate metabolism</keyword>
<keyword id="KW-0418">Kinase</keyword>
<keyword id="KW-0547">Nucleotide-binding</keyword>
<keyword id="KW-0808">Transferase</keyword>
<keyword id="KW-0859">Xylose metabolism</keyword>
<gene>
    <name evidence="1" type="primary">xylB</name>
</gene>
<name>XYLB_ACTS3</name>
<dbReference type="EC" id="2.7.1.17" evidence="1"/>
<dbReference type="EMBL" id="M15050">
    <property type="protein sequence ID" value="AAA92579.1"/>
    <property type="molecule type" value="Genomic_DNA"/>
</dbReference>
<dbReference type="SMR" id="P54271"/>
<dbReference type="GO" id="GO:0005524">
    <property type="term" value="F:ATP binding"/>
    <property type="evidence" value="ECO:0007669"/>
    <property type="project" value="UniProtKB-KW"/>
</dbReference>
<dbReference type="GO" id="GO:0004856">
    <property type="term" value="F:D-xylulokinase activity"/>
    <property type="evidence" value="ECO:0007669"/>
    <property type="project" value="UniProtKB-EC"/>
</dbReference>
<dbReference type="GO" id="GO:0042732">
    <property type="term" value="P:D-xylose metabolic process"/>
    <property type="evidence" value="ECO:0007669"/>
    <property type="project" value="UniProtKB-KW"/>
</dbReference>
<dbReference type="Gene3D" id="3.30.420.40">
    <property type="match status" value="1"/>
</dbReference>
<dbReference type="InterPro" id="IPR043129">
    <property type="entry name" value="ATPase_NBD"/>
</dbReference>
<dbReference type="InterPro" id="IPR050406">
    <property type="entry name" value="FGGY_Carb_Kinase"/>
</dbReference>
<dbReference type="InterPro" id="IPR018484">
    <property type="entry name" value="FGGY_N"/>
</dbReference>
<dbReference type="PANTHER" id="PTHR43095">
    <property type="entry name" value="SUGAR KINASE"/>
    <property type="match status" value="1"/>
</dbReference>
<dbReference type="PANTHER" id="PTHR43095:SF5">
    <property type="entry name" value="XYLULOSE KINASE"/>
    <property type="match status" value="1"/>
</dbReference>
<dbReference type="Pfam" id="PF00370">
    <property type="entry name" value="FGGY_N"/>
    <property type="match status" value="1"/>
</dbReference>
<dbReference type="SUPFAM" id="SSF53067">
    <property type="entry name" value="Actin-like ATPase domain"/>
    <property type="match status" value="1"/>
</dbReference>
<protein>
    <recommendedName>
        <fullName evidence="1">Xylulose kinase</fullName>
        <shortName evidence="1">Xylulokinase</shortName>
        <ecNumber evidence="1">2.7.1.17</ecNumber>
    </recommendedName>
</protein>